<keyword id="KW-0067">ATP-binding</keyword>
<keyword id="KW-0963">Cytoplasm</keyword>
<keyword id="KW-0418">Kinase</keyword>
<keyword id="KW-0460">Magnesium</keyword>
<keyword id="KW-0479">Metal-binding</keyword>
<keyword id="KW-0547">Nucleotide-binding</keyword>
<keyword id="KW-1185">Reference proteome</keyword>
<keyword id="KW-0808">Transferase</keyword>
<organism>
    <name type="scientific">Caldanaerobacter subterraneus subsp. tengcongensis (strain DSM 15242 / JCM 11007 / NBRC 100824 / MB4)</name>
    <name type="common">Thermoanaerobacter tengcongensis</name>
    <dbReference type="NCBI Taxonomy" id="273068"/>
    <lineage>
        <taxon>Bacteria</taxon>
        <taxon>Bacillati</taxon>
        <taxon>Bacillota</taxon>
        <taxon>Clostridia</taxon>
        <taxon>Thermoanaerobacterales</taxon>
        <taxon>Thermoanaerobacteraceae</taxon>
        <taxon>Caldanaerobacter</taxon>
    </lineage>
</organism>
<name>ACKA_CALS4</name>
<proteinExistence type="inferred from homology"/>
<dbReference type="EC" id="2.7.2.1" evidence="1"/>
<dbReference type="EMBL" id="AE008691">
    <property type="protein sequence ID" value="AAM24700.1"/>
    <property type="molecule type" value="Genomic_DNA"/>
</dbReference>
<dbReference type="RefSeq" id="WP_011025744.1">
    <property type="nucleotide sequence ID" value="NC_003869.1"/>
</dbReference>
<dbReference type="SMR" id="Q8R9V4"/>
<dbReference type="STRING" id="273068.TTE1481"/>
<dbReference type="KEGG" id="tte:TTE1481"/>
<dbReference type="eggNOG" id="COG0282">
    <property type="taxonomic scope" value="Bacteria"/>
</dbReference>
<dbReference type="HOGENOM" id="CLU_020352_0_1_9"/>
<dbReference type="OrthoDB" id="9802453at2"/>
<dbReference type="UniPathway" id="UPA00340">
    <property type="reaction ID" value="UER00458"/>
</dbReference>
<dbReference type="Proteomes" id="UP000000555">
    <property type="component" value="Chromosome"/>
</dbReference>
<dbReference type="GO" id="GO:0005737">
    <property type="term" value="C:cytoplasm"/>
    <property type="evidence" value="ECO:0007669"/>
    <property type="project" value="UniProtKB-SubCell"/>
</dbReference>
<dbReference type="GO" id="GO:0008776">
    <property type="term" value="F:acetate kinase activity"/>
    <property type="evidence" value="ECO:0007669"/>
    <property type="project" value="UniProtKB-UniRule"/>
</dbReference>
<dbReference type="GO" id="GO:0005524">
    <property type="term" value="F:ATP binding"/>
    <property type="evidence" value="ECO:0007669"/>
    <property type="project" value="UniProtKB-KW"/>
</dbReference>
<dbReference type="GO" id="GO:0000287">
    <property type="term" value="F:magnesium ion binding"/>
    <property type="evidence" value="ECO:0007669"/>
    <property type="project" value="UniProtKB-UniRule"/>
</dbReference>
<dbReference type="GO" id="GO:0006083">
    <property type="term" value="P:acetate metabolic process"/>
    <property type="evidence" value="ECO:0007669"/>
    <property type="project" value="TreeGrafter"/>
</dbReference>
<dbReference type="GO" id="GO:0006085">
    <property type="term" value="P:acetyl-CoA biosynthetic process"/>
    <property type="evidence" value="ECO:0007669"/>
    <property type="project" value="UniProtKB-UniRule"/>
</dbReference>
<dbReference type="CDD" id="cd24010">
    <property type="entry name" value="ASKHA_NBD_AcK_PK"/>
    <property type="match status" value="1"/>
</dbReference>
<dbReference type="Gene3D" id="3.30.420.40">
    <property type="match status" value="2"/>
</dbReference>
<dbReference type="HAMAP" id="MF_00020">
    <property type="entry name" value="Acetate_kinase"/>
    <property type="match status" value="1"/>
</dbReference>
<dbReference type="InterPro" id="IPR004372">
    <property type="entry name" value="Ac/propionate_kinase"/>
</dbReference>
<dbReference type="InterPro" id="IPR000890">
    <property type="entry name" value="Aliphatic_acid_kin_short-chain"/>
</dbReference>
<dbReference type="InterPro" id="IPR023865">
    <property type="entry name" value="Aliphatic_acid_kinase_CS"/>
</dbReference>
<dbReference type="InterPro" id="IPR043129">
    <property type="entry name" value="ATPase_NBD"/>
</dbReference>
<dbReference type="NCBIfam" id="TIGR00016">
    <property type="entry name" value="ackA"/>
    <property type="match status" value="1"/>
</dbReference>
<dbReference type="PANTHER" id="PTHR21060">
    <property type="entry name" value="ACETATE KINASE"/>
    <property type="match status" value="1"/>
</dbReference>
<dbReference type="PANTHER" id="PTHR21060:SF15">
    <property type="entry name" value="ACETATE KINASE-RELATED"/>
    <property type="match status" value="1"/>
</dbReference>
<dbReference type="Pfam" id="PF00871">
    <property type="entry name" value="Acetate_kinase"/>
    <property type="match status" value="1"/>
</dbReference>
<dbReference type="PIRSF" id="PIRSF000722">
    <property type="entry name" value="Acetate_prop_kin"/>
    <property type="match status" value="1"/>
</dbReference>
<dbReference type="PRINTS" id="PR00471">
    <property type="entry name" value="ACETATEKNASE"/>
</dbReference>
<dbReference type="SUPFAM" id="SSF53067">
    <property type="entry name" value="Actin-like ATPase domain"/>
    <property type="match status" value="2"/>
</dbReference>
<dbReference type="PROSITE" id="PS01075">
    <property type="entry name" value="ACETATE_KINASE_1"/>
    <property type="match status" value="1"/>
</dbReference>
<dbReference type="PROSITE" id="PS01076">
    <property type="entry name" value="ACETATE_KINASE_2"/>
    <property type="match status" value="1"/>
</dbReference>
<feature type="chain" id="PRO_0000107632" description="Acetate kinase">
    <location>
        <begin position="1"/>
        <end position="401"/>
    </location>
</feature>
<feature type="active site" description="Proton donor/acceptor" evidence="1">
    <location>
        <position position="148"/>
    </location>
</feature>
<feature type="binding site" evidence="1">
    <location>
        <position position="7"/>
    </location>
    <ligand>
        <name>Mg(2+)</name>
        <dbReference type="ChEBI" id="CHEBI:18420"/>
    </ligand>
</feature>
<feature type="binding site" evidence="1">
    <location>
        <position position="14"/>
    </location>
    <ligand>
        <name>ATP</name>
        <dbReference type="ChEBI" id="CHEBI:30616"/>
    </ligand>
</feature>
<feature type="binding site" evidence="1">
    <location>
        <position position="91"/>
    </location>
    <ligand>
        <name>substrate</name>
    </ligand>
</feature>
<feature type="binding site" evidence="1">
    <location>
        <begin position="208"/>
        <end position="212"/>
    </location>
    <ligand>
        <name>ATP</name>
        <dbReference type="ChEBI" id="CHEBI:30616"/>
    </ligand>
</feature>
<feature type="binding site" evidence="1">
    <location>
        <begin position="283"/>
        <end position="285"/>
    </location>
    <ligand>
        <name>ATP</name>
        <dbReference type="ChEBI" id="CHEBI:30616"/>
    </ligand>
</feature>
<feature type="binding site" evidence="1">
    <location>
        <begin position="332"/>
        <end position="336"/>
    </location>
    <ligand>
        <name>ATP</name>
        <dbReference type="ChEBI" id="CHEBI:30616"/>
    </ligand>
</feature>
<feature type="binding site" evidence="1">
    <location>
        <position position="385"/>
    </location>
    <ligand>
        <name>Mg(2+)</name>
        <dbReference type="ChEBI" id="CHEBI:18420"/>
    </ligand>
</feature>
<feature type="site" description="Transition state stabilizer" evidence="1">
    <location>
        <position position="180"/>
    </location>
</feature>
<feature type="site" description="Transition state stabilizer" evidence="1">
    <location>
        <position position="241"/>
    </location>
</feature>
<comment type="function">
    <text evidence="1">Catalyzes the formation of acetyl phosphate from acetate and ATP. Can also catalyze the reverse reaction.</text>
</comment>
<comment type="catalytic activity">
    <reaction evidence="1">
        <text>acetate + ATP = acetyl phosphate + ADP</text>
        <dbReference type="Rhea" id="RHEA:11352"/>
        <dbReference type="ChEBI" id="CHEBI:22191"/>
        <dbReference type="ChEBI" id="CHEBI:30089"/>
        <dbReference type="ChEBI" id="CHEBI:30616"/>
        <dbReference type="ChEBI" id="CHEBI:456216"/>
        <dbReference type="EC" id="2.7.2.1"/>
    </reaction>
</comment>
<comment type="cofactor">
    <cofactor evidence="1">
        <name>Mg(2+)</name>
        <dbReference type="ChEBI" id="CHEBI:18420"/>
    </cofactor>
    <cofactor evidence="1">
        <name>Mn(2+)</name>
        <dbReference type="ChEBI" id="CHEBI:29035"/>
    </cofactor>
    <text evidence="1">Mg(2+). Can also accept Mn(2+).</text>
</comment>
<comment type="pathway">
    <text evidence="1">Metabolic intermediate biosynthesis; acetyl-CoA biosynthesis; acetyl-CoA from acetate: step 1/2.</text>
</comment>
<comment type="subunit">
    <text evidence="1">Homodimer.</text>
</comment>
<comment type="subcellular location">
    <subcellularLocation>
        <location evidence="1">Cytoplasm</location>
    </subcellularLocation>
</comment>
<comment type="similarity">
    <text evidence="1">Belongs to the acetokinase family.</text>
</comment>
<reference key="1">
    <citation type="journal article" date="2002" name="Genome Res.">
        <title>A complete sequence of the T. tengcongensis genome.</title>
        <authorList>
            <person name="Bao Q."/>
            <person name="Tian Y."/>
            <person name="Li W."/>
            <person name="Xu Z."/>
            <person name="Xuan Z."/>
            <person name="Hu S."/>
            <person name="Dong W."/>
            <person name="Yang J."/>
            <person name="Chen Y."/>
            <person name="Xue Y."/>
            <person name="Xu Y."/>
            <person name="Lai X."/>
            <person name="Huang L."/>
            <person name="Dong X."/>
            <person name="Ma Y."/>
            <person name="Ling L."/>
            <person name="Tan H."/>
            <person name="Chen R."/>
            <person name="Wang J."/>
            <person name="Yu J."/>
            <person name="Yang H."/>
        </authorList>
    </citation>
    <scope>NUCLEOTIDE SEQUENCE [LARGE SCALE GENOMIC DNA]</scope>
    <source>
        <strain>DSM 15242 / JCM 11007 / NBRC 100824 / MB4</strain>
    </source>
</reference>
<evidence type="ECO:0000255" key="1">
    <source>
        <dbReference type="HAMAP-Rule" id="MF_00020"/>
    </source>
</evidence>
<gene>
    <name evidence="1" type="primary">ackA</name>
    <name type="ordered locus">TTE1481</name>
</gene>
<sequence>MKILVMNCGSSSLKYQLLDMENNKVLAKGLAERIGINDSLLTHQAEGKEKVKIQRDMKNHKEAIQLVLEVLVDKEIGVIKDMKEIDAVGHRVVHGGEYFTDSVLIDDEVIKKLEDCIDLAPLHNPANIEGIKACQQIMPGVPMVAVFDTAFHQTMPDYAYIYPIPYEYYEKHRIRRYGFHGTSHKYVSMRAAEILGRPIEELKIVTCHLGNGASITAVKNGKSIDTSMGFTPLEGLAMGTRSGSIDPSIVTFLMEKEGLTAHQVVDILNKKSGVYGISGISNDFRDIENAAFNEGNKRAMLALKVFAYIAKKTIGAYAAAMGGVDAIVFTAGVGENGPEMREFILEGLEFLGFTLDKEKNRVRGKEAIISTEDSRVKVMVIPTNEEYMIAKDTEKLVKGIK</sequence>
<accession>Q8R9V4</accession>
<protein>
    <recommendedName>
        <fullName evidence="1">Acetate kinase</fullName>
        <ecNumber evidence="1">2.7.2.1</ecNumber>
    </recommendedName>
    <alternativeName>
        <fullName evidence="1">Acetokinase</fullName>
    </alternativeName>
</protein>